<name>PUS9_YEAST</name>
<keyword id="KW-0413">Isomerase</keyword>
<keyword id="KW-0496">Mitochondrion</keyword>
<keyword id="KW-1185">Reference proteome</keyword>
<keyword id="KW-0694">RNA-binding</keyword>
<keyword id="KW-0809">Transit peptide</keyword>
<keyword id="KW-0819">tRNA processing</keyword>
<reference key="1">
    <citation type="journal article" date="1997" name="Nature">
        <title>The nucleotide sequence of Saccharomyces cerevisiae chromosome IV.</title>
        <authorList>
            <person name="Jacq C."/>
            <person name="Alt-Moerbe J."/>
            <person name="Andre B."/>
            <person name="Arnold W."/>
            <person name="Bahr A."/>
            <person name="Ballesta J.P.G."/>
            <person name="Bargues M."/>
            <person name="Baron L."/>
            <person name="Becker A."/>
            <person name="Biteau N."/>
            <person name="Bloecker H."/>
            <person name="Blugeon C."/>
            <person name="Boskovic J."/>
            <person name="Brandt P."/>
            <person name="Brueckner M."/>
            <person name="Buitrago M.J."/>
            <person name="Coster F."/>
            <person name="Delaveau T."/>
            <person name="del Rey F."/>
            <person name="Dujon B."/>
            <person name="Eide L.G."/>
            <person name="Garcia-Cantalejo J.M."/>
            <person name="Goffeau A."/>
            <person name="Gomez-Peris A."/>
            <person name="Granotier C."/>
            <person name="Hanemann V."/>
            <person name="Hankeln T."/>
            <person name="Hoheisel J.D."/>
            <person name="Jaeger W."/>
            <person name="Jimenez A."/>
            <person name="Jonniaux J.-L."/>
            <person name="Kraemer C."/>
            <person name="Kuester H."/>
            <person name="Laamanen P."/>
            <person name="Legros Y."/>
            <person name="Louis E.J."/>
            <person name="Moeller-Rieker S."/>
            <person name="Monnet A."/>
            <person name="Moro M."/>
            <person name="Mueller-Auer S."/>
            <person name="Nussbaumer B."/>
            <person name="Paricio N."/>
            <person name="Paulin L."/>
            <person name="Perea J."/>
            <person name="Perez-Alonso M."/>
            <person name="Perez-Ortin J.E."/>
            <person name="Pohl T.M."/>
            <person name="Prydz H."/>
            <person name="Purnelle B."/>
            <person name="Rasmussen S.W."/>
            <person name="Remacha M.A."/>
            <person name="Revuelta J.L."/>
            <person name="Rieger M."/>
            <person name="Salom D."/>
            <person name="Saluz H.P."/>
            <person name="Saiz J.E."/>
            <person name="Saren A.-M."/>
            <person name="Schaefer M."/>
            <person name="Scharfe M."/>
            <person name="Schmidt E.R."/>
            <person name="Schneider C."/>
            <person name="Scholler P."/>
            <person name="Schwarz S."/>
            <person name="Soler-Mira A."/>
            <person name="Urrestarazu L.A."/>
            <person name="Verhasselt P."/>
            <person name="Vissers S."/>
            <person name="Voet M."/>
            <person name="Volckaert G."/>
            <person name="Wagner G."/>
            <person name="Wambutt R."/>
            <person name="Wedler E."/>
            <person name="Wedler H."/>
            <person name="Woelfl S."/>
            <person name="Harris D.E."/>
            <person name="Bowman S."/>
            <person name="Brown D."/>
            <person name="Churcher C.M."/>
            <person name="Connor R."/>
            <person name="Dedman K."/>
            <person name="Gentles S."/>
            <person name="Hamlin N."/>
            <person name="Hunt S."/>
            <person name="Jones L."/>
            <person name="McDonald S."/>
            <person name="Murphy L.D."/>
            <person name="Niblett D."/>
            <person name="Odell C."/>
            <person name="Oliver K."/>
            <person name="Rajandream M.A."/>
            <person name="Richards C."/>
            <person name="Shore L."/>
            <person name="Walsh S.V."/>
            <person name="Barrell B.G."/>
            <person name="Dietrich F.S."/>
            <person name="Mulligan J.T."/>
            <person name="Allen E."/>
            <person name="Araujo R."/>
            <person name="Aviles E."/>
            <person name="Berno A."/>
            <person name="Carpenter J."/>
            <person name="Chen E."/>
            <person name="Cherry J.M."/>
            <person name="Chung E."/>
            <person name="Duncan M."/>
            <person name="Hunicke-Smith S."/>
            <person name="Hyman R.W."/>
            <person name="Komp C."/>
            <person name="Lashkari D."/>
            <person name="Lew H."/>
            <person name="Lin D."/>
            <person name="Mosedale D."/>
            <person name="Nakahara K."/>
            <person name="Namath A."/>
            <person name="Oefner P."/>
            <person name="Oh C."/>
            <person name="Petel F.X."/>
            <person name="Roberts D."/>
            <person name="Schramm S."/>
            <person name="Schroeder M."/>
            <person name="Shogren T."/>
            <person name="Shroff N."/>
            <person name="Winant A."/>
            <person name="Yelton M.A."/>
            <person name="Botstein D."/>
            <person name="Davis R.W."/>
            <person name="Johnston M."/>
            <person name="Andrews S."/>
            <person name="Brinkman R."/>
            <person name="Cooper J."/>
            <person name="Ding H."/>
            <person name="Du Z."/>
            <person name="Favello A."/>
            <person name="Fulton L."/>
            <person name="Gattung S."/>
            <person name="Greco T."/>
            <person name="Hallsworth K."/>
            <person name="Hawkins J."/>
            <person name="Hillier L.W."/>
            <person name="Jier M."/>
            <person name="Johnson D."/>
            <person name="Johnston L."/>
            <person name="Kirsten J."/>
            <person name="Kucaba T."/>
            <person name="Langston Y."/>
            <person name="Latreille P."/>
            <person name="Le T."/>
            <person name="Mardis E."/>
            <person name="Menezes S."/>
            <person name="Miller N."/>
            <person name="Nhan M."/>
            <person name="Pauley A."/>
            <person name="Peluso D."/>
            <person name="Rifkin L."/>
            <person name="Riles L."/>
            <person name="Taich A."/>
            <person name="Trevaskis E."/>
            <person name="Vignati D."/>
            <person name="Wilcox L."/>
            <person name="Wohldman P."/>
            <person name="Vaudin M."/>
            <person name="Wilson R."/>
            <person name="Waterston R."/>
            <person name="Albermann K."/>
            <person name="Hani J."/>
            <person name="Heumann K."/>
            <person name="Kleine K."/>
            <person name="Mewes H.-W."/>
            <person name="Zollner A."/>
            <person name="Zaccaria P."/>
        </authorList>
    </citation>
    <scope>NUCLEOTIDE SEQUENCE [LARGE SCALE GENOMIC DNA]</scope>
    <source>
        <strain>ATCC 204508 / S288c</strain>
    </source>
</reference>
<reference key="2">
    <citation type="journal article" date="2014" name="G3 (Bethesda)">
        <title>The reference genome sequence of Saccharomyces cerevisiae: Then and now.</title>
        <authorList>
            <person name="Engel S.R."/>
            <person name="Dietrich F.S."/>
            <person name="Fisk D.G."/>
            <person name="Binkley G."/>
            <person name="Balakrishnan R."/>
            <person name="Costanzo M.C."/>
            <person name="Dwight S.S."/>
            <person name="Hitz B.C."/>
            <person name="Karra K."/>
            <person name="Nash R.S."/>
            <person name="Weng S."/>
            <person name="Wong E.D."/>
            <person name="Lloyd P."/>
            <person name="Skrzypek M.S."/>
            <person name="Miyasato S.R."/>
            <person name="Simison M."/>
            <person name="Cherry J.M."/>
        </authorList>
    </citation>
    <scope>GENOME REANNOTATION</scope>
    <source>
        <strain>ATCC 204508 / S288c</strain>
    </source>
</reference>
<reference key="3">
    <citation type="journal article" date="2007" name="Genome Res.">
        <title>Approaching a complete repository of sequence-verified protein-encoding clones for Saccharomyces cerevisiae.</title>
        <authorList>
            <person name="Hu Y."/>
            <person name="Rolfs A."/>
            <person name="Bhullar B."/>
            <person name="Murthy T.V.S."/>
            <person name="Zhu C."/>
            <person name="Berger M.F."/>
            <person name="Camargo A.A."/>
            <person name="Kelley F."/>
            <person name="McCarron S."/>
            <person name="Jepson D."/>
            <person name="Richardson A."/>
            <person name="Raphael J."/>
            <person name="Moreira D."/>
            <person name="Taycher E."/>
            <person name="Zuo D."/>
            <person name="Mohr S."/>
            <person name="Kane M.F."/>
            <person name="Williamson J."/>
            <person name="Simpson A.J.G."/>
            <person name="Bulyk M.L."/>
            <person name="Harlow E."/>
            <person name="Marsischky G."/>
            <person name="Kolodner R.D."/>
            <person name="LaBaer J."/>
        </authorList>
    </citation>
    <scope>NUCLEOTIDE SEQUENCE [GENOMIC DNA]</scope>
    <source>
        <strain>ATCC 204508 / S288c</strain>
    </source>
</reference>
<reference key="4">
    <citation type="journal article" date="2003" name="Nature">
        <title>Global analysis of protein expression in yeast.</title>
        <authorList>
            <person name="Ghaemmaghami S."/>
            <person name="Huh W.-K."/>
            <person name="Bower K."/>
            <person name="Howson R.W."/>
            <person name="Belle A."/>
            <person name="Dephoure N."/>
            <person name="O'Shea E.K."/>
            <person name="Weissman J.S."/>
        </authorList>
    </citation>
    <scope>LEVEL OF PROTEIN EXPRESSION [LARGE SCALE ANALYSIS]</scope>
</reference>
<reference key="5">
    <citation type="journal article" date="2004" name="J. Biol. Chem.">
        <title>Pseudouridylation at position 32 of mitochondrial and cytoplasmic tRNAs requires two distinct enzymes in Saccharomyces cerevisiae.</title>
        <authorList>
            <person name="Behm-Ansmant I."/>
            <person name="Grosjean H."/>
            <person name="Massenet S."/>
            <person name="Motorin Y."/>
            <person name="Branlant C."/>
        </authorList>
    </citation>
    <scope>FUNCTION</scope>
    <scope>CATALYTIC ACTIVITY</scope>
    <scope>SUBCELLULAR LOCATION</scope>
</reference>
<reference key="6">
    <citation type="journal article" date="2014" name="Cell">
        <title>Transcriptome-wide mapping reveals widespread dynamic-regulated pseudouridylation of ncRNA and mRNA.</title>
        <authorList>
            <person name="Schwartz S."/>
            <person name="Bernstein D.A."/>
            <person name="Mumbach M.R."/>
            <person name="Jovanovic M."/>
            <person name="Herbst R.H."/>
            <person name="Leon-Ricardo B.X."/>
            <person name="Engreitz J.M."/>
            <person name="Guttman M."/>
            <person name="Satija R."/>
            <person name="Lander E.S."/>
            <person name="Fink G."/>
            <person name="Regev A."/>
        </authorList>
    </citation>
    <scope>FUNCTION</scope>
    <scope>CATALYTIC ACTIVITY</scope>
</reference>
<evidence type="ECO:0000250" key="1">
    <source>
        <dbReference type="UniProtKB" id="P0AA37"/>
    </source>
</evidence>
<evidence type="ECO:0000255" key="2"/>
<evidence type="ECO:0000255" key="3">
    <source>
        <dbReference type="PROSITE-ProRule" id="PRU00182"/>
    </source>
</evidence>
<evidence type="ECO:0000269" key="4">
    <source>
    </source>
</evidence>
<evidence type="ECO:0000269" key="5">
    <source>
    </source>
</evidence>
<evidence type="ECO:0000269" key="6">
    <source>
    </source>
</evidence>
<evidence type="ECO:0000305" key="7"/>
<evidence type="ECO:0000305" key="8">
    <source>
    </source>
</evidence>
<comment type="function">
    <text evidence="5 6">Responsible for synthesis of pseudouridine from uracil-32 in mitochondrial transfer RNAs.</text>
</comment>
<comment type="catalytic activity">
    <reaction evidence="5 6">
        <text>uridine(32) in tRNA = pseudouridine(32) in tRNA</text>
        <dbReference type="Rhea" id="RHEA:42544"/>
        <dbReference type="Rhea" id="RHEA-COMP:10107"/>
        <dbReference type="Rhea" id="RHEA-COMP:10108"/>
        <dbReference type="ChEBI" id="CHEBI:65314"/>
        <dbReference type="ChEBI" id="CHEBI:65315"/>
        <dbReference type="EC" id="5.4.99.28"/>
    </reaction>
</comment>
<comment type="subcellular location">
    <subcellularLocation>
        <location evidence="8">Mitochondrion</location>
    </subcellularLocation>
</comment>
<comment type="miscellaneous">
    <text evidence="4">Present with 639 molecules/cell in log phase SD medium.</text>
</comment>
<comment type="similarity">
    <text evidence="7">Belongs to the pseudouridine synthase RluA family.</text>
</comment>
<accession>Q12069</accession>
<accession>D6VRV8</accession>
<accession>Q6B2P8</accession>
<feature type="transit peptide" description="Mitochondrion" evidence="2">
    <location>
        <begin position="1"/>
        <end position="24"/>
    </location>
</feature>
<feature type="chain" id="PRO_0000162756" description="tRNA pseudouridine(32) synthase, mitochondrial">
    <location>
        <begin position="25"/>
        <end position="462"/>
    </location>
</feature>
<feature type="domain" description="S4 RNA-binding" evidence="3">
    <location>
        <begin position="127"/>
        <end position="188"/>
    </location>
</feature>
<feature type="active site" evidence="1">
    <location>
        <position position="238"/>
    </location>
</feature>
<feature type="sequence conflict" description="In Ref. 3; AAT92701." evidence="7" ref="3">
    <original>W</original>
    <variation>R</variation>
    <location>
        <position position="458"/>
    </location>
</feature>
<organism>
    <name type="scientific">Saccharomyces cerevisiae (strain ATCC 204508 / S288c)</name>
    <name type="common">Baker's yeast</name>
    <dbReference type="NCBI Taxonomy" id="559292"/>
    <lineage>
        <taxon>Eukaryota</taxon>
        <taxon>Fungi</taxon>
        <taxon>Dikarya</taxon>
        <taxon>Ascomycota</taxon>
        <taxon>Saccharomycotina</taxon>
        <taxon>Saccharomycetes</taxon>
        <taxon>Saccharomycetales</taxon>
        <taxon>Saccharomycetaceae</taxon>
        <taxon>Saccharomyces</taxon>
    </lineage>
</organism>
<protein>
    <recommendedName>
        <fullName>tRNA pseudouridine(32) synthase, mitochondrial</fullName>
        <ecNumber>5.4.99.28</ecNumber>
    </recommendedName>
    <alternativeName>
        <fullName>tRNA pseudouridine synthase 9</fullName>
    </alternativeName>
    <alternativeName>
        <fullName>tRNA pseudouridylate synthase 9</fullName>
    </alternativeName>
    <alternativeName>
        <fullName>tRNA-uridine isomerase 9</fullName>
    </alternativeName>
</protein>
<proteinExistence type="evidence at protein level"/>
<gene>
    <name type="primary">PUS9</name>
    <name type="ordered locus">YDL036C</name>
    <name type="ORF">D2743</name>
</gene>
<dbReference type="EC" id="5.4.99.28"/>
<dbReference type="EMBL" id="Z71781">
    <property type="protein sequence ID" value="CAA96453.1"/>
    <property type="molecule type" value="Genomic_DNA"/>
</dbReference>
<dbReference type="EMBL" id="Z74084">
    <property type="protein sequence ID" value="CAA98595.1"/>
    <property type="molecule type" value="Genomic_DNA"/>
</dbReference>
<dbReference type="EMBL" id="AY692682">
    <property type="protein sequence ID" value="AAT92701.1"/>
    <property type="molecule type" value="Genomic_DNA"/>
</dbReference>
<dbReference type="EMBL" id="BK006938">
    <property type="protein sequence ID" value="DAA11818.1"/>
    <property type="molecule type" value="Genomic_DNA"/>
</dbReference>
<dbReference type="PIR" id="S67569">
    <property type="entry name" value="S67569"/>
</dbReference>
<dbReference type="RefSeq" id="NP_010248.1">
    <property type="nucleotide sequence ID" value="NM_001180095.1"/>
</dbReference>
<dbReference type="SMR" id="Q12069"/>
<dbReference type="BioGRID" id="32022">
    <property type="interactions" value="42"/>
</dbReference>
<dbReference type="DIP" id="DIP-5399N"/>
<dbReference type="FunCoup" id="Q12069">
    <property type="interactions" value="468"/>
</dbReference>
<dbReference type="IntAct" id="Q12069">
    <property type="interactions" value="2"/>
</dbReference>
<dbReference type="MINT" id="Q12069"/>
<dbReference type="STRING" id="4932.YDL036C"/>
<dbReference type="iPTMnet" id="Q12069"/>
<dbReference type="PaxDb" id="4932-YDL036C"/>
<dbReference type="PeptideAtlas" id="Q12069"/>
<dbReference type="EnsemblFungi" id="YDL036C_mRNA">
    <property type="protein sequence ID" value="YDL036C"/>
    <property type="gene ID" value="YDL036C"/>
</dbReference>
<dbReference type="GeneID" id="851525"/>
<dbReference type="KEGG" id="sce:YDL036C"/>
<dbReference type="AGR" id="SGD:S000002194"/>
<dbReference type="SGD" id="S000002194">
    <property type="gene designation" value="PUS9"/>
</dbReference>
<dbReference type="VEuPathDB" id="FungiDB:YDL036C"/>
<dbReference type="eggNOG" id="KOG1919">
    <property type="taxonomic scope" value="Eukaryota"/>
</dbReference>
<dbReference type="GeneTree" id="ENSGT00420000029802"/>
<dbReference type="HOGENOM" id="CLU_016902_12_4_1"/>
<dbReference type="InParanoid" id="Q12069"/>
<dbReference type="OMA" id="QTYCKGR"/>
<dbReference type="OrthoDB" id="424794at2759"/>
<dbReference type="BioCyc" id="MetaCyc:G3O-29460-MONOMER"/>
<dbReference type="BioCyc" id="YEAST:G3O-29460-MONOMER"/>
<dbReference type="BRENDA" id="5.4.99.28">
    <property type="organism ID" value="984"/>
</dbReference>
<dbReference type="BioGRID-ORCS" id="851525">
    <property type="hits" value="0 hits in 10 CRISPR screens"/>
</dbReference>
<dbReference type="CD-CODE" id="E03F929F">
    <property type="entry name" value="Stress granule"/>
</dbReference>
<dbReference type="PRO" id="PR:Q12069"/>
<dbReference type="Proteomes" id="UP000002311">
    <property type="component" value="Chromosome IV"/>
</dbReference>
<dbReference type="RNAct" id="Q12069">
    <property type="molecule type" value="protein"/>
</dbReference>
<dbReference type="GO" id="GO:0005737">
    <property type="term" value="C:cytoplasm"/>
    <property type="evidence" value="ECO:0007005"/>
    <property type="project" value="SGD"/>
</dbReference>
<dbReference type="GO" id="GO:0005739">
    <property type="term" value="C:mitochondrion"/>
    <property type="evidence" value="ECO:0000315"/>
    <property type="project" value="SGD"/>
</dbReference>
<dbReference type="GO" id="GO:0005634">
    <property type="term" value="C:nucleus"/>
    <property type="evidence" value="ECO:0007005"/>
    <property type="project" value="SGD"/>
</dbReference>
<dbReference type="GO" id="GO:0009982">
    <property type="term" value="F:pseudouridine synthase activity"/>
    <property type="evidence" value="ECO:0000314"/>
    <property type="project" value="UniProtKB"/>
</dbReference>
<dbReference type="GO" id="GO:0003723">
    <property type="term" value="F:RNA binding"/>
    <property type="evidence" value="ECO:0007669"/>
    <property type="project" value="UniProtKB-KW"/>
</dbReference>
<dbReference type="GO" id="GO:0160151">
    <property type="term" value="F:tRNA pseudouridine(32) synthase activity"/>
    <property type="evidence" value="ECO:0007669"/>
    <property type="project" value="UniProtKB-EC"/>
</dbReference>
<dbReference type="GO" id="GO:0000455">
    <property type="term" value="P:enzyme-directed rRNA pseudouridine synthesis"/>
    <property type="evidence" value="ECO:0000314"/>
    <property type="project" value="UniProtKB"/>
</dbReference>
<dbReference type="GO" id="GO:0031119">
    <property type="term" value="P:tRNA pseudouridine synthesis"/>
    <property type="evidence" value="ECO:0000314"/>
    <property type="project" value="SGD"/>
</dbReference>
<dbReference type="CDD" id="cd02557">
    <property type="entry name" value="PseudoU_synth_ScRIB2"/>
    <property type="match status" value="1"/>
</dbReference>
<dbReference type="FunFam" id="3.30.2350.10:FF:000017">
    <property type="entry name" value="Pseudouridine synthase"/>
    <property type="match status" value="1"/>
</dbReference>
<dbReference type="Gene3D" id="3.30.2350.10">
    <property type="entry name" value="Pseudouridine synthase"/>
    <property type="match status" value="1"/>
</dbReference>
<dbReference type="InterPro" id="IPR020103">
    <property type="entry name" value="PsdUridine_synth_cat_dom_sf"/>
</dbReference>
<dbReference type="InterPro" id="IPR006224">
    <property type="entry name" value="PsdUridine_synth_RluA-like_CS"/>
</dbReference>
<dbReference type="InterPro" id="IPR006225">
    <property type="entry name" value="PsdUridine_synth_RluC/D"/>
</dbReference>
<dbReference type="InterPro" id="IPR006145">
    <property type="entry name" value="PsdUridine_synth_RsuA/RluA"/>
</dbReference>
<dbReference type="InterPro" id="IPR050188">
    <property type="entry name" value="RluA_PseudoU_synthase"/>
</dbReference>
<dbReference type="NCBIfam" id="TIGR00005">
    <property type="entry name" value="rluA_subfam"/>
    <property type="match status" value="1"/>
</dbReference>
<dbReference type="PANTHER" id="PTHR21600">
    <property type="entry name" value="MITOCHONDRIAL RNA PSEUDOURIDINE SYNTHASE"/>
    <property type="match status" value="1"/>
</dbReference>
<dbReference type="PANTHER" id="PTHR21600:SF40">
    <property type="entry name" value="PSEUDOURIDYLATE SYNTHASE RPUSD2"/>
    <property type="match status" value="1"/>
</dbReference>
<dbReference type="Pfam" id="PF00849">
    <property type="entry name" value="PseudoU_synth_2"/>
    <property type="match status" value="1"/>
</dbReference>
<dbReference type="SUPFAM" id="SSF55120">
    <property type="entry name" value="Pseudouridine synthase"/>
    <property type="match status" value="1"/>
</dbReference>
<dbReference type="PROSITE" id="PS01129">
    <property type="entry name" value="PSI_RLU"/>
    <property type="match status" value="1"/>
</dbReference>
<dbReference type="PROSITE" id="PS50889">
    <property type="entry name" value="S4"/>
    <property type="match status" value="1"/>
</dbReference>
<sequence>MQRNNRLRNLFTVPVIMARQLKRNALSAGLAFAGNATSNEFDEHLQNEVEREREIQKKKKIKRTQSKKSPDLINKSTFQSRTIGSKKEKHRQLDPEYEIVIDGPLRKIKPYHFTYRTFCKERWRDKKLVDVFISEFRDRESEYYKRTIENGDVHINDETADLSTVIRNGDLITHQVHRHEPPVTSRPIKVIFEDDNIMVIDKPSGIPVHPTGRYRFNTITKMLQNNLGFVVNPCNRLDRLTSGLMFLAKTPKGADNIGDQLKAREVTKEYVAKVVGEFPETEVIVEKPLKLIEPRLALNAVCQMDEKGAKHAKTVFNRISYDGKTSIVKCKPLTGRSHQIRVHLQYLGHPIANDPIYSNDEVWGNNLGKGGQADFDIVITKLDEIGKRKPAKSWFHSNGGYGEVLRQEKCSICESDLYTDPGPNDLDLWLHAYLYESTETEEGTEKKKWCYKTEYPEWALRR</sequence>